<organism>
    <name type="scientific">Rattus norvegicus</name>
    <name type="common">Rat</name>
    <dbReference type="NCBI Taxonomy" id="10116"/>
    <lineage>
        <taxon>Eukaryota</taxon>
        <taxon>Metazoa</taxon>
        <taxon>Chordata</taxon>
        <taxon>Craniata</taxon>
        <taxon>Vertebrata</taxon>
        <taxon>Euteleostomi</taxon>
        <taxon>Mammalia</taxon>
        <taxon>Eutheria</taxon>
        <taxon>Euarchontoglires</taxon>
        <taxon>Glires</taxon>
        <taxon>Rodentia</taxon>
        <taxon>Myomorpha</taxon>
        <taxon>Muroidea</taxon>
        <taxon>Muridae</taxon>
        <taxon>Murinae</taxon>
        <taxon>Rattus</taxon>
    </lineage>
</organism>
<gene>
    <name type="primary">Ube2v2</name>
    <name type="synonym">Mms2</name>
    <name type="synonym">Uev2</name>
</gene>
<reference key="1">
    <citation type="journal article" date="2003" name="Brain Res. Mol. Brain Res.">
        <title>Identification of numerous genes differentially expressed in rat brain during postnatal development by suppression subtractive hybridization and expression analysis of the novel rat gene rMMS2.</title>
        <authorList>
            <person name="Hofsaess U."/>
            <person name="Kapfhammer J.P."/>
        </authorList>
    </citation>
    <scope>NUCLEOTIDE SEQUENCE [MRNA]</scope>
    <scope>DEVELOPMENTAL STAGE</scope>
    <source>
        <strain>Sprague-Dawley</strain>
        <tissue>Fetal cerebellum</tissue>
    </source>
</reference>
<reference key="2">
    <citation type="journal article" date="2004" name="Genome Res.">
        <title>The status, quality, and expansion of the NIH full-length cDNA project: the Mammalian Gene Collection (MGC).</title>
        <authorList>
            <consortium name="The MGC Project Team"/>
        </authorList>
    </citation>
    <scope>NUCLEOTIDE SEQUENCE [LARGE SCALE MRNA]</scope>
    <source>
        <tissue>Ovary</tissue>
    </source>
</reference>
<reference key="3">
    <citation type="submission" date="2007-07" db="UniProtKB">
        <authorList>
            <person name="Lubec G."/>
            <person name="Kang S.U."/>
        </authorList>
    </citation>
    <scope>PROTEIN SEQUENCE OF 15-24; 46-55 AND 73-81</scope>
    <scope>IDENTIFICATION BY MASS SPECTROMETRY</scope>
    <source>
        <strain>Sprague-Dawley</strain>
        <tissue>Brain</tissue>
    </source>
</reference>
<reference key="4">
    <citation type="journal article" date="2007" name="Mol. Endocrinol.">
        <title>Angiotensin II-induced neural differentiation via angiotensin II type 2 (AT2) receptor-MMS2 cascade involving interaction between AT2 receptor-interacting protein and Src homology 2 domain-containing protein-tyrosine phosphatase 1.</title>
        <authorList>
            <person name="Li J.-M."/>
            <person name="Mogi M."/>
            <person name="Tsukuda K."/>
            <person name="Tomochika H."/>
            <person name="Iwanami J."/>
            <person name="Min L.-J."/>
            <person name="Nahmias C."/>
            <person name="Iwai M."/>
            <person name="Horiuchi M."/>
        </authorList>
    </citation>
    <scope>FUNCTION</scope>
    <scope>DEVELOPMENTAL STAGE</scope>
    <scope>INDUCTION BY ANGIOTENSIN-II</scope>
</reference>
<sequence>MAVSTGVKVPRNFRLLEELEEGQKGVGDGTVSWGLEDDEDMTLTRWTGMIIGPPRTNYENRIYSLKVECGSKYPEAPPSVRFVTKINMNGINNSSGMVDARSIPVLAKWQNSYSIKVVLQELRRLMMSKENMKLPQPPEGQTYNN</sequence>
<name>UB2V2_RAT</name>
<protein>
    <recommendedName>
        <fullName>Ubiquitin-conjugating enzyme E2 variant 2</fullName>
    </recommendedName>
    <alternativeName>
        <fullName>Ubiquitin-conjugating enzyme variant MMS2</fullName>
    </alternativeName>
</protein>
<dbReference type="EMBL" id="AJ515244">
    <property type="protein sequence ID" value="CAD56165.1"/>
    <property type="molecule type" value="mRNA"/>
</dbReference>
<dbReference type="EMBL" id="BN000090">
    <property type="protein sequence ID" value="CAD56854.1"/>
    <property type="molecule type" value="mRNA"/>
</dbReference>
<dbReference type="EMBL" id="BC087593">
    <property type="protein sequence ID" value="AAH87593.1"/>
    <property type="molecule type" value="mRNA"/>
</dbReference>
<dbReference type="RefSeq" id="NP_898875.1">
    <property type="nucleotide sequence ID" value="NM_183052.2"/>
</dbReference>
<dbReference type="SMR" id="Q7M767"/>
<dbReference type="FunCoup" id="Q7M767">
    <property type="interactions" value="4622"/>
</dbReference>
<dbReference type="STRING" id="10116.ENSRNOP00000062102"/>
<dbReference type="PhosphoSitePlus" id="Q7M767"/>
<dbReference type="SwissPalm" id="Q7M767"/>
<dbReference type="jPOST" id="Q7M767"/>
<dbReference type="PaxDb" id="10116-ENSRNOP00000062102"/>
<dbReference type="GeneID" id="287927"/>
<dbReference type="KEGG" id="rno:287927"/>
<dbReference type="UCSC" id="RGD:727838">
    <property type="organism name" value="rat"/>
</dbReference>
<dbReference type="AGR" id="RGD:727838"/>
<dbReference type="CTD" id="7336"/>
<dbReference type="RGD" id="727838">
    <property type="gene designation" value="Ube2v2"/>
</dbReference>
<dbReference type="eggNOG" id="KOG0896">
    <property type="taxonomic scope" value="Eukaryota"/>
</dbReference>
<dbReference type="HOGENOM" id="CLU_063065_3_0_1"/>
<dbReference type="InParanoid" id="Q7M767"/>
<dbReference type="OrthoDB" id="6508832at2759"/>
<dbReference type="PhylomeDB" id="Q7M767"/>
<dbReference type="TreeFam" id="TF316971"/>
<dbReference type="Reactome" id="R-RNO-5693565">
    <property type="pathway name" value="Recruitment and ATM-mediated phosphorylation of repair and signaling proteins at DNA double strand breaks"/>
</dbReference>
<dbReference type="Reactome" id="R-RNO-5693571">
    <property type="pathway name" value="Nonhomologous End-Joining (NHEJ)"/>
</dbReference>
<dbReference type="Reactome" id="R-RNO-5693607">
    <property type="pathway name" value="Processing of DNA double-strand break ends"/>
</dbReference>
<dbReference type="Reactome" id="R-RNO-69473">
    <property type="pathway name" value="G2/M DNA damage checkpoint"/>
</dbReference>
<dbReference type="Reactome" id="R-RNO-983168">
    <property type="pathway name" value="Antigen processing: Ubiquitination &amp; Proteasome degradation"/>
</dbReference>
<dbReference type="PRO" id="PR:Q7M767"/>
<dbReference type="Proteomes" id="UP000002494">
    <property type="component" value="Chromosome 11"/>
</dbReference>
<dbReference type="Bgee" id="ENSRNOG00000001829">
    <property type="expression patterns" value="Expressed in cerebellum and 20 other cell types or tissues"/>
</dbReference>
<dbReference type="ExpressionAtlas" id="Q7M767">
    <property type="expression patterns" value="baseline and differential"/>
</dbReference>
<dbReference type="GO" id="GO:0005634">
    <property type="term" value="C:nucleus"/>
    <property type="evidence" value="ECO:0000266"/>
    <property type="project" value="RGD"/>
</dbReference>
<dbReference type="GO" id="GO:0031372">
    <property type="term" value="C:UBC13-MMS2 complex"/>
    <property type="evidence" value="ECO:0000266"/>
    <property type="project" value="RGD"/>
</dbReference>
<dbReference type="GO" id="GO:0031371">
    <property type="term" value="C:ubiquitin conjugating enzyme complex"/>
    <property type="evidence" value="ECO:0000318"/>
    <property type="project" value="GO_Central"/>
</dbReference>
<dbReference type="GO" id="GO:0000729">
    <property type="term" value="P:DNA double-strand break processing"/>
    <property type="evidence" value="ECO:0000266"/>
    <property type="project" value="RGD"/>
</dbReference>
<dbReference type="GO" id="GO:0042275">
    <property type="term" value="P:error-free postreplication DNA repair"/>
    <property type="evidence" value="ECO:0000266"/>
    <property type="project" value="RGD"/>
</dbReference>
<dbReference type="GO" id="GO:0043524">
    <property type="term" value="P:negative regulation of neuron apoptotic process"/>
    <property type="evidence" value="ECO:0000315"/>
    <property type="project" value="RGD"/>
</dbReference>
<dbReference type="GO" id="GO:0045739">
    <property type="term" value="P:positive regulation of DNA repair"/>
    <property type="evidence" value="ECO:0000315"/>
    <property type="project" value="RGD"/>
</dbReference>
<dbReference type="GO" id="GO:2000781">
    <property type="term" value="P:positive regulation of double-strand break repair"/>
    <property type="evidence" value="ECO:0000266"/>
    <property type="project" value="RGD"/>
</dbReference>
<dbReference type="GO" id="GO:0010976">
    <property type="term" value="P:positive regulation of neuron projection development"/>
    <property type="evidence" value="ECO:0000315"/>
    <property type="project" value="RGD"/>
</dbReference>
<dbReference type="GO" id="GO:0032436">
    <property type="term" value="P:positive regulation of proteasomal ubiquitin-dependent protein catabolic process"/>
    <property type="evidence" value="ECO:0000315"/>
    <property type="project" value="RGD"/>
</dbReference>
<dbReference type="GO" id="GO:1902523">
    <property type="term" value="P:positive regulation of protein K63-linked ubiquitination"/>
    <property type="evidence" value="ECO:0000266"/>
    <property type="project" value="RGD"/>
</dbReference>
<dbReference type="GO" id="GO:0051965">
    <property type="term" value="P:positive regulation of synapse assembly"/>
    <property type="evidence" value="ECO:0000315"/>
    <property type="project" value="RGD"/>
</dbReference>
<dbReference type="GO" id="GO:0006301">
    <property type="term" value="P:postreplication repair"/>
    <property type="evidence" value="ECO:0000318"/>
    <property type="project" value="GO_Central"/>
</dbReference>
<dbReference type="GO" id="GO:0070534">
    <property type="term" value="P:protein K63-linked ubiquitination"/>
    <property type="evidence" value="ECO:0000318"/>
    <property type="project" value="GO_Central"/>
</dbReference>
<dbReference type="CDD" id="cd23807">
    <property type="entry name" value="UEV_UBE2V"/>
    <property type="match status" value="1"/>
</dbReference>
<dbReference type="FunFam" id="3.10.110.10:FF:000012">
    <property type="entry name" value="Ubiquitin-conjugating enzyme E2 variant 2"/>
    <property type="match status" value="1"/>
</dbReference>
<dbReference type="Gene3D" id="3.10.110.10">
    <property type="entry name" value="Ubiquitin Conjugating Enzyme"/>
    <property type="match status" value="1"/>
</dbReference>
<dbReference type="InterPro" id="IPR000608">
    <property type="entry name" value="UBQ-conjugat_E2_core"/>
</dbReference>
<dbReference type="InterPro" id="IPR016135">
    <property type="entry name" value="UBQ-conjugating_enzyme/RWD"/>
</dbReference>
<dbReference type="PANTHER" id="PTHR24068">
    <property type="entry name" value="UBIQUITIN-CONJUGATING ENZYME E2"/>
    <property type="match status" value="1"/>
</dbReference>
<dbReference type="Pfam" id="PF00179">
    <property type="entry name" value="UQ_con"/>
    <property type="match status" value="1"/>
</dbReference>
<dbReference type="SMART" id="SM00212">
    <property type="entry name" value="UBCc"/>
    <property type="match status" value="1"/>
</dbReference>
<dbReference type="SUPFAM" id="SSF54495">
    <property type="entry name" value="UBC-like"/>
    <property type="match status" value="1"/>
</dbReference>
<dbReference type="PROSITE" id="PS50127">
    <property type="entry name" value="UBC_2"/>
    <property type="match status" value="1"/>
</dbReference>
<accession>Q7M767</accession>
<accession>Q8CHN0</accession>
<proteinExistence type="evidence at protein level"/>
<evidence type="ECO:0000250" key="1"/>
<evidence type="ECO:0000250" key="2">
    <source>
        <dbReference type="UniProtKB" id="Q15819"/>
    </source>
</evidence>
<evidence type="ECO:0000255" key="3">
    <source>
        <dbReference type="PROSITE-ProRule" id="PRU00388"/>
    </source>
</evidence>
<evidence type="ECO:0000269" key="4">
    <source>
    </source>
</evidence>
<evidence type="ECO:0000269" key="5">
    <source>
    </source>
</evidence>
<feature type="initiator methionine" description="Removed" evidence="2">
    <location>
        <position position="1"/>
    </location>
</feature>
<feature type="chain" id="PRO_0000082604" description="Ubiquitin-conjugating enzyme E2 variant 2">
    <location>
        <begin position="2"/>
        <end position="145"/>
    </location>
</feature>
<feature type="domain" description="UBC core" evidence="3">
    <location>
        <begin position="10"/>
        <end position="145"/>
    </location>
</feature>
<feature type="modified residue" description="N-acetylalanine" evidence="2">
    <location>
        <position position="2"/>
    </location>
</feature>
<keyword id="KW-0007">Acetylation</keyword>
<keyword id="KW-0903">Direct protein sequencing</keyword>
<keyword id="KW-1185">Reference proteome</keyword>
<keyword id="KW-0833">Ubl conjugation pathway</keyword>
<comment type="function">
    <text evidence="5">Has no ubiquitin ligase activity on its own. The UBE2V2/UBE2N heterodimer catalyzes the synthesis of non-canonical poly-ubiquitin chains that are linked through 'Lys-63'. This type of poly-ubiquitination does not lead to protein degradation by the proteasome. Mediates transcriptional activation of target genes. Plays a role in the control of progress through the cell cycle and differentiation. Plays a role in the error-free DNA repair pathway and contributes to the survival of cells after DNA damage.</text>
</comment>
<comment type="subunit">
    <text evidence="1">Heterodimer with UBE2N. Binds CHFR (By similarity).</text>
</comment>
<comment type="developmental stage">
    <text evidence="4 5">Highly expressed in embryonic cerebral cortex, hippocampus and cerebellum between day 18 and up to birth. Levels are distictly lower 10 days after birth, and not detectable in adults (at protein level).</text>
</comment>
<comment type="induction">
    <text evidence="5">By angiotensin-II or its agonist CGP42112A, via MTUS1 and PTPN6 (at protein level).</text>
</comment>
<comment type="similarity">
    <text evidence="3">Belongs to the ubiquitin-conjugating enzyme family.</text>
</comment>